<name>CH60B_DROME</name>
<keyword id="KW-0067">ATP-binding</keyword>
<keyword id="KW-0143">Chaperone</keyword>
<keyword id="KW-0496">Mitochondrion</keyword>
<keyword id="KW-0547">Nucleotide-binding</keyword>
<keyword id="KW-1185">Reference proteome</keyword>
<keyword id="KW-0809">Transit peptide</keyword>
<accession>Q9VPS5</accession>
<accession>Q53YH7</accession>
<accession>Q961V0</accession>
<evidence type="ECO:0000250" key="1"/>
<evidence type="ECO:0000305" key="2"/>
<sequence length="648" mass="68637">MFRSCVPKAITSSRCFARMYSKDVRFGSGVRAMMIRGVDILADAVAVTMGPKGRSVIVERPWTSPKITKDGFTVARSIALKDQHMNLGAKLVQDVADNTNESAGDGTTTATVLARAIAKEGFNQITMGANPVEIRRGVMLAVDVVKDKLKEMSKAVETREEIQQVATLSANGDTEIGRLIGEATDKVGPRGTITVKDGKRLKDELNIIQGLRFDNGYVSPFFVNSSKGSKVEFANALVMISLKKITGLSQIVKGLEQSLRQRRPLIIIAEDISGEALNALVLNKLRLGLQVCAVKSPSYGHHRKELIGDISAATGATIFGDDINYSKMEEAKLEDLGQVGEAVISKDSTMLLQGKPKTGLLEMRIQQIQDELAEKQIKPEQRDRLRQRLSALTKGVAVLHIGGGSEVEVNEKKDRVVDALNATRAAIEEGIVPGGGTAFLRCIPYLQELKTESADLQKGVDIVCNALRMPCQTIAQNAGVDGPMVVAKVLNGSEDYGYDAMGDEYCRLVEKGIIDPTKVLRTAITDAAGVASLLSTTEVVITDSRNDDLLSKLSGAGGGMDDGLDMNMGGLEELAALSGLGGMGGMGGMGGMGGMGGMGGGFGGMGAGGGMSASASNDGPTAEEMNEMVKAIPGMEQVEVRDIDSGMM</sequence>
<protein>
    <recommendedName>
        <fullName>60 kDa heat shock protein homolog 1, mitochondrial</fullName>
    </recommendedName>
    <alternativeName>
        <fullName>60 kDa chaperonin</fullName>
    </alternativeName>
    <alternativeName>
        <fullName>CPN60</fullName>
    </alternativeName>
    <alternativeName>
        <fullName>Heat shock protein 60</fullName>
        <shortName>HSP-60</shortName>
    </alternativeName>
    <alternativeName>
        <fullName>Hsp60</fullName>
    </alternativeName>
</protein>
<feature type="transit peptide" description="Mitochondrion" evidence="1">
    <location>
        <begin position="1"/>
        <end position="55"/>
    </location>
</feature>
<feature type="chain" id="PRO_0000005032" description="60 kDa heat shock protein homolog 1, mitochondrial">
    <location>
        <begin position="56"/>
        <end position="648"/>
    </location>
</feature>
<feature type="sequence conflict" description="In Ref. 3; AAK77276." evidence="2" ref="3">
    <original>K</original>
    <variation>N</variation>
    <location>
        <position position="199"/>
    </location>
</feature>
<feature type="sequence conflict" description="In Ref. 3; AAK77276." evidence="2" ref="3">
    <location>
        <begin position="581"/>
        <end position="589"/>
    </location>
</feature>
<proteinExistence type="evidence at transcript level"/>
<organism>
    <name type="scientific">Drosophila melanogaster</name>
    <name type="common">Fruit fly</name>
    <dbReference type="NCBI Taxonomy" id="7227"/>
    <lineage>
        <taxon>Eukaryota</taxon>
        <taxon>Metazoa</taxon>
        <taxon>Ecdysozoa</taxon>
        <taxon>Arthropoda</taxon>
        <taxon>Hexapoda</taxon>
        <taxon>Insecta</taxon>
        <taxon>Pterygota</taxon>
        <taxon>Neoptera</taxon>
        <taxon>Endopterygota</taxon>
        <taxon>Diptera</taxon>
        <taxon>Brachycera</taxon>
        <taxon>Muscomorpha</taxon>
        <taxon>Ephydroidea</taxon>
        <taxon>Drosophilidae</taxon>
        <taxon>Drosophila</taxon>
        <taxon>Sophophora</taxon>
    </lineage>
</organism>
<comment type="function">
    <text evidence="1">Prevents misfolding and promotes the refolding and proper assembly of unfolded polypeptides generated under stress conditions.</text>
</comment>
<comment type="subcellular location">
    <subcellularLocation>
        <location evidence="1">Mitochondrion matrix</location>
    </subcellularLocation>
</comment>
<comment type="similarity">
    <text evidence="2">Belongs to the chaperonin (HSP60) family.</text>
</comment>
<reference key="1">
    <citation type="journal article" date="2000" name="Science">
        <title>The genome sequence of Drosophila melanogaster.</title>
        <authorList>
            <person name="Adams M.D."/>
            <person name="Celniker S.E."/>
            <person name="Holt R.A."/>
            <person name="Evans C.A."/>
            <person name="Gocayne J.D."/>
            <person name="Amanatides P.G."/>
            <person name="Scherer S.E."/>
            <person name="Li P.W."/>
            <person name="Hoskins R.A."/>
            <person name="Galle R.F."/>
            <person name="George R.A."/>
            <person name="Lewis S.E."/>
            <person name="Richards S."/>
            <person name="Ashburner M."/>
            <person name="Henderson S.N."/>
            <person name="Sutton G.G."/>
            <person name="Wortman J.R."/>
            <person name="Yandell M.D."/>
            <person name="Zhang Q."/>
            <person name="Chen L.X."/>
            <person name="Brandon R.C."/>
            <person name="Rogers Y.-H.C."/>
            <person name="Blazej R.G."/>
            <person name="Champe M."/>
            <person name="Pfeiffer B.D."/>
            <person name="Wan K.H."/>
            <person name="Doyle C."/>
            <person name="Baxter E.G."/>
            <person name="Helt G."/>
            <person name="Nelson C.R."/>
            <person name="Miklos G.L.G."/>
            <person name="Abril J.F."/>
            <person name="Agbayani A."/>
            <person name="An H.-J."/>
            <person name="Andrews-Pfannkoch C."/>
            <person name="Baldwin D."/>
            <person name="Ballew R.M."/>
            <person name="Basu A."/>
            <person name="Baxendale J."/>
            <person name="Bayraktaroglu L."/>
            <person name="Beasley E.M."/>
            <person name="Beeson K.Y."/>
            <person name="Benos P.V."/>
            <person name="Berman B.P."/>
            <person name="Bhandari D."/>
            <person name="Bolshakov S."/>
            <person name="Borkova D."/>
            <person name="Botchan M.R."/>
            <person name="Bouck J."/>
            <person name="Brokstein P."/>
            <person name="Brottier P."/>
            <person name="Burtis K.C."/>
            <person name="Busam D.A."/>
            <person name="Butler H."/>
            <person name="Cadieu E."/>
            <person name="Center A."/>
            <person name="Chandra I."/>
            <person name="Cherry J.M."/>
            <person name="Cawley S."/>
            <person name="Dahlke C."/>
            <person name="Davenport L.B."/>
            <person name="Davies P."/>
            <person name="de Pablos B."/>
            <person name="Delcher A."/>
            <person name="Deng Z."/>
            <person name="Mays A.D."/>
            <person name="Dew I."/>
            <person name="Dietz S.M."/>
            <person name="Dodson K."/>
            <person name="Doup L.E."/>
            <person name="Downes M."/>
            <person name="Dugan-Rocha S."/>
            <person name="Dunkov B.C."/>
            <person name="Dunn P."/>
            <person name="Durbin K.J."/>
            <person name="Evangelista C.C."/>
            <person name="Ferraz C."/>
            <person name="Ferriera S."/>
            <person name="Fleischmann W."/>
            <person name="Fosler C."/>
            <person name="Gabrielian A.E."/>
            <person name="Garg N.S."/>
            <person name="Gelbart W.M."/>
            <person name="Glasser K."/>
            <person name="Glodek A."/>
            <person name="Gong F."/>
            <person name="Gorrell J.H."/>
            <person name="Gu Z."/>
            <person name="Guan P."/>
            <person name="Harris M."/>
            <person name="Harris N.L."/>
            <person name="Harvey D.A."/>
            <person name="Heiman T.J."/>
            <person name="Hernandez J.R."/>
            <person name="Houck J."/>
            <person name="Hostin D."/>
            <person name="Houston K.A."/>
            <person name="Howland T.J."/>
            <person name="Wei M.-H."/>
            <person name="Ibegwam C."/>
            <person name="Jalali M."/>
            <person name="Kalush F."/>
            <person name="Karpen G.H."/>
            <person name="Ke Z."/>
            <person name="Kennison J.A."/>
            <person name="Ketchum K.A."/>
            <person name="Kimmel B.E."/>
            <person name="Kodira C.D."/>
            <person name="Kraft C.L."/>
            <person name="Kravitz S."/>
            <person name="Kulp D."/>
            <person name="Lai Z."/>
            <person name="Lasko P."/>
            <person name="Lei Y."/>
            <person name="Levitsky A.A."/>
            <person name="Li J.H."/>
            <person name="Li Z."/>
            <person name="Liang Y."/>
            <person name="Lin X."/>
            <person name="Liu X."/>
            <person name="Mattei B."/>
            <person name="McIntosh T.C."/>
            <person name="McLeod M.P."/>
            <person name="McPherson D."/>
            <person name="Merkulov G."/>
            <person name="Milshina N.V."/>
            <person name="Mobarry C."/>
            <person name="Morris J."/>
            <person name="Moshrefi A."/>
            <person name="Mount S.M."/>
            <person name="Moy M."/>
            <person name="Murphy B."/>
            <person name="Murphy L."/>
            <person name="Muzny D.M."/>
            <person name="Nelson D.L."/>
            <person name="Nelson D.R."/>
            <person name="Nelson K.A."/>
            <person name="Nixon K."/>
            <person name="Nusskern D.R."/>
            <person name="Pacleb J.M."/>
            <person name="Palazzolo M."/>
            <person name="Pittman G.S."/>
            <person name="Pan S."/>
            <person name="Pollard J."/>
            <person name="Puri V."/>
            <person name="Reese M.G."/>
            <person name="Reinert K."/>
            <person name="Remington K."/>
            <person name="Saunders R.D.C."/>
            <person name="Scheeler F."/>
            <person name="Shen H."/>
            <person name="Shue B.C."/>
            <person name="Siden-Kiamos I."/>
            <person name="Simpson M."/>
            <person name="Skupski M.P."/>
            <person name="Smith T.J."/>
            <person name="Spier E."/>
            <person name="Spradling A.C."/>
            <person name="Stapleton M."/>
            <person name="Strong R."/>
            <person name="Sun E."/>
            <person name="Svirskas R."/>
            <person name="Tector C."/>
            <person name="Turner R."/>
            <person name="Venter E."/>
            <person name="Wang A.H."/>
            <person name="Wang X."/>
            <person name="Wang Z.-Y."/>
            <person name="Wassarman D.A."/>
            <person name="Weinstock G.M."/>
            <person name="Weissenbach J."/>
            <person name="Williams S.M."/>
            <person name="Woodage T."/>
            <person name="Worley K.C."/>
            <person name="Wu D."/>
            <person name="Yang S."/>
            <person name="Yao Q.A."/>
            <person name="Ye J."/>
            <person name="Yeh R.-F."/>
            <person name="Zaveri J.S."/>
            <person name="Zhan M."/>
            <person name="Zhang G."/>
            <person name="Zhao Q."/>
            <person name="Zheng L."/>
            <person name="Zheng X.H."/>
            <person name="Zhong F.N."/>
            <person name="Zhong W."/>
            <person name="Zhou X."/>
            <person name="Zhu S.C."/>
            <person name="Zhu X."/>
            <person name="Smith H.O."/>
            <person name="Gibbs R.A."/>
            <person name="Myers E.W."/>
            <person name="Rubin G.M."/>
            <person name="Venter J.C."/>
        </authorList>
    </citation>
    <scope>NUCLEOTIDE SEQUENCE [LARGE SCALE GENOMIC DNA]</scope>
    <source>
        <strain>Berkeley</strain>
    </source>
</reference>
<reference key="2">
    <citation type="journal article" date="2002" name="Genome Biol.">
        <title>Annotation of the Drosophila melanogaster euchromatic genome: a systematic review.</title>
        <authorList>
            <person name="Misra S."/>
            <person name="Crosby M.A."/>
            <person name="Mungall C.J."/>
            <person name="Matthews B.B."/>
            <person name="Campbell K.S."/>
            <person name="Hradecky P."/>
            <person name="Huang Y."/>
            <person name="Kaminker J.S."/>
            <person name="Millburn G.H."/>
            <person name="Prochnik S.E."/>
            <person name="Smith C.D."/>
            <person name="Tupy J.L."/>
            <person name="Whitfield E.J."/>
            <person name="Bayraktaroglu L."/>
            <person name="Berman B.P."/>
            <person name="Bettencourt B.R."/>
            <person name="Celniker S.E."/>
            <person name="de Grey A.D.N.J."/>
            <person name="Drysdale R.A."/>
            <person name="Harris N.L."/>
            <person name="Richter J."/>
            <person name="Russo S."/>
            <person name="Schroeder A.J."/>
            <person name="Shu S.Q."/>
            <person name="Stapleton M."/>
            <person name="Yamada C."/>
            <person name="Ashburner M."/>
            <person name="Gelbart W.M."/>
            <person name="Rubin G.M."/>
            <person name="Lewis S.E."/>
        </authorList>
    </citation>
    <scope>GENOME REANNOTATION</scope>
    <source>
        <strain>Berkeley</strain>
    </source>
</reference>
<reference key="3">
    <citation type="journal article" date="2002" name="Genome Biol.">
        <title>A Drosophila full-length cDNA resource.</title>
        <authorList>
            <person name="Stapleton M."/>
            <person name="Carlson J.W."/>
            <person name="Brokstein P."/>
            <person name="Yu C."/>
            <person name="Champe M."/>
            <person name="George R.A."/>
            <person name="Guarin H."/>
            <person name="Kronmiller B."/>
            <person name="Pacleb J.M."/>
            <person name="Park S."/>
            <person name="Wan K.H."/>
            <person name="Rubin G.M."/>
            <person name="Celniker S.E."/>
        </authorList>
    </citation>
    <scope>NUCLEOTIDE SEQUENCE [LARGE SCALE MRNA]</scope>
    <source>
        <strain>Berkeley</strain>
        <tissue>Head</tissue>
    </source>
</reference>
<gene>
    <name type="primary">Hsp60B</name>
    <name type="ORF">CG2830</name>
</gene>
<dbReference type="EMBL" id="AE014134">
    <property type="protein sequence ID" value="AAF51467.1"/>
    <property type="molecule type" value="Genomic_DNA"/>
</dbReference>
<dbReference type="EMBL" id="AY047544">
    <property type="protein sequence ID" value="AAK77276.1"/>
    <property type="molecule type" value="mRNA"/>
</dbReference>
<dbReference type="EMBL" id="BT001426">
    <property type="protein sequence ID" value="AAN71181.1"/>
    <property type="molecule type" value="mRNA"/>
</dbReference>
<dbReference type="RefSeq" id="NP_524925.1">
    <property type="nucleotide sequence ID" value="NM_080186.4"/>
</dbReference>
<dbReference type="SMR" id="Q9VPS5"/>
<dbReference type="BioGRID" id="71509">
    <property type="interactions" value="39"/>
</dbReference>
<dbReference type="DIP" id="DIP-17907N"/>
<dbReference type="FunCoup" id="Q9VPS5">
    <property type="interactions" value="440"/>
</dbReference>
<dbReference type="IntAct" id="Q9VPS5">
    <property type="interactions" value="4"/>
</dbReference>
<dbReference type="STRING" id="7227.FBpp0077665"/>
<dbReference type="GlyGen" id="Q9VPS5">
    <property type="glycosylation" value="2 sites"/>
</dbReference>
<dbReference type="PaxDb" id="7227-FBpp0077665"/>
<dbReference type="DNASU" id="48572"/>
<dbReference type="EnsemblMetazoa" id="FBtr0078000">
    <property type="protein sequence ID" value="FBpp0077665"/>
    <property type="gene ID" value="FBgn0011244"/>
</dbReference>
<dbReference type="GeneID" id="48572"/>
<dbReference type="KEGG" id="dme:Dmel_CG2830"/>
<dbReference type="AGR" id="FB:FBgn0011244"/>
<dbReference type="CTD" id="48572"/>
<dbReference type="FlyBase" id="FBgn0011244">
    <property type="gene designation" value="Hsp60B"/>
</dbReference>
<dbReference type="VEuPathDB" id="VectorBase:FBgn0011244"/>
<dbReference type="eggNOG" id="KOG0356">
    <property type="taxonomic scope" value="Eukaryota"/>
</dbReference>
<dbReference type="GeneTree" id="ENSGT00390000005727"/>
<dbReference type="HOGENOM" id="CLU_016503_3_0_1"/>
<dbReference type="InParanoid" id="Q9VPS5"/>
<dbReference type="OMA" id="LKDQHMN"/>
<dbReference type="OrthoDB" id="7845221at2759"/>
<dbReference type="PhylomeDB" id="Q9VPS5"/>
<dbReference type="SignaLink" id="Q9VPS5"/>
<dbReference type="BioGRID-ORCS" id="48572">
    <property type="hits" value="0 hits in 1 CRISPR screen"/>
</dbReference>
<dbReference type="ChiTaRS" id="Hsp60B">
    <property type="organism name" value="fly"/>
</dbReference>
<dbReference type="GenomeRNAi" id="48572"/>
<dbReference type="PRO" id="PR:Q9VPS5"/>
<dbReference type="Proteomes" id="UP000000803">
    <property type="component" value="Chromosome 2L"/>
</dbReference>
<dbReference type="Bgee" id="FBgn0011244">
    <property type="expression patterns" value="Expressed in early elongation stage spermatid (Drosophila) in testis and 27 other cell types or tissues"/>
</dbReference>
<dbReference type="GO" id="GO:0005743">
    <property type="term" value="C:mitochondrial inner membrane"/>
    <property type="evidence" value="ECO:0000318"/>
    <property type="project" value="GO_Central"/>
</dbReference>
<dbReference type="GO" id="GO:0005759">
    <property type="term" value="C:mitochondrial matrix"/>
    <property type="evidence" value="ECO:0000318"/>
    <property type="project" value="GO_Central"/>
</dbReference>
<dbReference type="GO" id="GO:0005524">
    <property type="term" value="F:ATP binding"/>
    <property type="evidence" value="ECO:0007669"/>
    <property type="project" value="UniProtKB-KW"/>
</dbReference>
<dbReference type="GO" id="GO:0016887">
    <property type="term" value="F:ATP hydrolysis activity"/>
    <property type="evidence" value="ECO:0000250"/>
    <property type="project" value="FlyBase"/>
</dbReference>
<dbReference type="GO" id="GO:0140662">
    <property type="term" value="F:ATP-dependent protein folding chaperone"/>
    <property type="evidence" value="ECO:0007669"/>
    <property type="project" value="InterPro"/>
</dbReference>
<dbReference type="GO" id="GO:0051087">
    <property type="term" value="F:protein-folding chaperone binding"/>
    <property type="evidence" value="ECO:0000318"/>
    <property type="project" value="GO_Central"/>
</dbReference>
<dbReference type="GO" id="GO:0008637">
    <property type="term" value="P:apoptotic mitochondrial changes"/>
    <property type="evidence" value="ECO:0000318"/>
    <property type="project" value="GO_Central"/>
</dbReference>
<dbReference type="GO" id="GO:0034514">
    <property type="term" value="P:mitochondrial unfolded protein response"/>
    <property type="evidence" value="ECO:0000318"/>
    <property type="project" value="GO_Central"/>
</dbReference>
<dbReference type="GO" id="GO:0006457">
    <property type="term" value="P:protein folding"/>
    <property type="evidence" value="ECO:0000318"/>
    <property type="project" value="GO_Central"/>
</dbReference>
<dbReference type="GO" id="GO:0045041">
    <property type="term" value="P:protein import into mitochondrial intermembrane space"/>
    <property type="evidence" value="ECO:0000318"/>
    <property type="project" value="GO_Central"/>
</dbReference>
<dbReference type="GO" id="GO:0042026">
    <property type="term" value="P:protein refolding"/>
    <property type="evidence" value="ECO:0007669"/>
    <property type="project" value="InterPro"/>
</dbReference>
<dbReference type="CDD" id="cd03344">
    <property type="entry name" value="GroEL"/>
    <property type="match status" value="1"/>
</dbReference>
<dbReference type="FunFam" id="3.50.7.10:FF:000001">
    <property type="entry name" value="60 kDa chaperonin"/>
    <property type="match status" value="1"/>
</dbReference>
<dbReference type="FunFam" id="1.10.560.10:FF:000031">
    <property type="entry name" value="60 kDa heat shock protein, mitochondrial"/>
    <property type="match status" value="1"/>
</dbReference>
<dbReference type="Gene3D" id="3.50.7.10">
    <property type="entry name" value="GroEL"/>
    <property type="match status" value="1"/>
</dbReference>
<dbReference type="Gene3D" id="1.10.560.10">
    <property type="entry name" value="GroEL-like equatorial domain"/>
    <property type="match status" value="1"/>
</dbReference>
<dbReference type="Gene3D" id="3.30.260.10">
    <property type="entry name" value="TCP-1-like chaperonin intermediate domain"/>
    <property type="match status" value="1"/>
</dbReference>
<dbReference type="InterPro" id="IPR018370">
    <property type="entry name" value="Chaperonin_Cpn60_CS"/>
</dbReference>
<dbReference type="InterPro" id="IPR001844">
    <property type="entry name" value="Cpn60/GroEL"/>
</dbReference>
<dbReference type="InterPro" id="IPR002423">
    <property type="entry name" value="Cpn60/GroEL/TCP-1"/>
</dbReference>
<dbReference type="InterPro" id="IPR027409">
    <property type="entry name" value="GroEL-like_apical_dom_sf"/>
</dbReference>
<dbReference type="InterPro" id="IPR027413">
    <property type="entry name" value="GROEL-like_equatorial_sf"/>
</dbReference>
<dbReference type="InterPro" id="IPR027410">
    <property type="entry name" value="TCP-1-like_intermed_sf"/>
</dbReference>
<dbReference type="NCBIfam" id="TIGR02348">
    <property type="entry name" value="GroEL"/>
    <property type="match status" value="1"/>
</dbReference>
<dbReference type="NCBIfam" id="NF000592">
    <property type="entry name" value="PRK00013.1"/>
    <property type="match status" value="1"/>
</dbReference>
<dbReference type="NCBIfam" id="NF009487">
    <property type="entry name" value="PRK12849.1"/>
    <property type="match status" value="1"/>
</dbReference>
<dbReference type="NCBIfam" id="NF009488">
    <property type="entry name" value="PRK12850.1"/>
    <property type="match status" value="1"/>
</dbReference>
<dbReference type="NCBIfam" id="NF009489">
    <property type="entry name" value="PRK12851.1"/>
    <property type="match status" value="1"/>
</dbReference>
<dbReference type="PANTHER" id="PTHR45633">
    <property type="entry name" value="60 KDA HEAT SHOCK PROTEIN, MITOCHONDRIAL"/>
    <property type="match status" value="1"/>
</dbReference>
<dbReference type="Pfam" id="PF00118">
    <property type="entry name" value="Cpn60_TCP1"/>
    <property type="match status" value="1"/>
</dbReference>
<dbReference type="PRINTS" id="PR00298">
    <property type="entry name" value="CHAPERONIN60"/>
</dbReference>
<dbReference type="SUPFAM" id="SSF52029">
    <property type="entry name" value="GroEL apical domain-like"/>
    <property type="match status" value="1"/>
</dbReference>
<dbReference type="SUPFAM" id="SSF48592">
    <property type="entry name" value="GroEL equatorial domain-like"/>
    <property type="match status" value="1"/>
</dbReference>
<dbReference type="SUPFAM" id="SSF54849">
    <property type="entry name" value="GroEL-intermediate domain like"/>
    <property type="match status" value="2"/>
</dbReference>
<dbReference type="PROSITE" id="PS00296">
    <property type="entry name" value="CHAPERONINS_CPN60"/>
    <property type="match status" value="1"/>
</dbReference>